<gene>
    <name type="primary">ORF47</name>
</gene>
<proteinExistence type="inferred from homology"/>
<protein>
    <recommendedName>
        <fullName>Subtilisin-like protease</fullName>
        <ecNumber>3.4.21.-</ecNumber>
    </recommendedName>
</protein>
<dbReference type="EC" id="3.4.21.-"/>
<dbReference type="EMBL" id="M75136">
    <property type="protein sequence ID" value="AAA88150.2"/>
    <property type="molecule type" value="Genomic_DNA"/>
</dbReference>
<dbReference type="PIR" id="C36791">
    <property type="entry name" value="PRBEI1"/>
</dbReference>
<dbReference type="RefSeq" id="NP_041138.2">
    <property type="nucleotide sequence ID" value="NC_001493.2"/>
</dbReference>
<dbReference type="SMR" id="Q00139"/>
<dbReference type="GeneID" id="1488436"/>
<dbReference type="KEGG" id="vg:1488436"/>
<dbReference type="Proteomes" id="UP000007643">
    <property type="component" value="Segment"/>
</dbReference>
<dbReference type="GO" id="GO:0016020">
    <property type="term" value="C:membrane"/>
    <property type="evidence" value="ECO:0007669"/>
    <property type="project" value="TreeGrafter"/>
</dbReference>
<dbReference type="GO" id="GO:0004252">
    <property type="term" value="F:serine-type endopeptidase activity"/>
    <property type="evidence" value="ECO:0007669"/>
    <property type="project" value="InterPro"/>
</dbReference>
<dbReference type="GO" id="GO:0016485">
    <property type="term" value="P:protein processing"/>
    <property type="evidence" value="ECO:0007669"/>
    <property type="project" value="TreeGrafter"/>
</dbReference>
<dbReference type="Gene3D" id="2.60.120.260">
    <property type="entry name" value="Galactose-binding domain-like"/>
    <property type="match status" value="1"/>
</dbReference>
<dbReference type="Gene3D" id="3.40.50.200">
    <property type="entry name" value="Peptidase S8/S53 domain"/>
    <property type="match status" value="1"/>
</dbReference>
<dbReference type="InterPro" id="IPR008979">
    <property type="entry name" value="Galactose-bd-like_sf"/>
</dbReference>
<dbReference type="InterPro" id="IPR002884">
    <property type="entry name" value="P_dom"/>
</dbReference>
<dbReference type="InterPro" id="IPR036852">
    <property type="entry name" value="Peptidase_S8/S53_dom_sf"/>
</dbReference>
<dbReference type="PANTHER" id="PTHR42884:SF14">
    <property type="entry name" value="NEUROENDOCRINE CONVERTASE 1"/>
    <property type="match status" value="1"/>
</dbReference>
<dbReference type="PANTHER" id="PTHR42884">
    <property type="entry name" value="PROPROTEIN CONVERTASE SUBTILISIN/KEXIN-RELATED"/>
    <property type="match status" value="1"/>
</dbReference>
<dbReference type="Pfam" id="PF01483">
    <property type="entry name" value="P_proprotein"/>
    <property type="match status" value="1"/>
</dbReference>
<dbReference type="SUPFAM" id="SSF49785">
    <property type="entry name" value="Galactose-binding domain-like"/>
    <property type="match status" value="1"/>
</dbReference>
<dbReference type="SUPFAM" id="SSF52743">
    <property type="entry name" value="Subtilisin-like"/>
    <property type="match status" value="1"/>
</dbReference>
<dbReference type="PROSITE" id="PS51829">
    <property type="entry name" value="P_HOMO_B"/>
    <property type="match status" value="1"/>
</dbReference>
<dbReference type="PROSITE" id="PS51892">
    <property type="entry name" value="SUBTILASE"/>
    <property type="match status" value="1"/>
</dbReference>
<reference key="1">
    <citation type="journal article" date="1992" name="Virology">
        <title>Channel catfish virus: a new type of herpesvirus.</title>
        <authorList>
            <person name="Davison A.J."/>
        </authorList>
    </citation>
    <scope>NUCLEOTIDE SEQUENCE [LARGE SCALE GENOMIC DNA]</scope>
</reference>
<reference key="2">
    <citation type="submission" date="2006-04" db="EMBL/GenBank/DDBJ databases">
        <authorList>
            <person name="Davison A.J."/>
        </authorList>
    </citation>
    <scope>SEQUENCE REVISION</scope>
</reference>
<organism>
    <name type="scientific">Ictalurid herpesvirus 1 (strain Auburn)</name>
    <name type="common">IcHV-1</name>
    <name type="synonym">Channel catfish herpesvirus</name>
    <dbReference type="NCBI Taxonomy" id="766178"/>
    <lineage>
        <taxon>Viruses</taxon>
        <taxon>Duplodnaviria</taxon>
        <taxon>Heunggongvirae</taxon>
        <taxon>Peploviricota</taxon>
        <taxon>Herviviricetes</taxon>
        <taxon>Herpesvirales</taxon>
        <taxon>Alloherpesviridae</taxon>
        <taxon>Ictavirus</taxon>
        <taxon>Ictavirus ictaluridallo1</taxon>
        <taxon>Ictalurid herpesvirus 1</taxon>
    </lineage>
</organism>
<sequence length="370" mass="39886">MIASIVFFIVLVDGVATGSPNALVTDFDCRPGMKHCGVCQQLISGSTGANALCSYKGVGDFIVNNFSMGPVDWLWPSTAPSYAVVSESWGCVDDGAAFCDTTGNFRDHRGRVAREGRDGLGTVLIRPAGNGGPIDDCGADGFTQAIGTVVTTVTDYTRSERCAAVLVTVPPPNETVWYDGKCGFIPSSSSAAPPILGNMLLALIRAHPTLTLRMIQRILVRAAKPVTVTGWRGRGWWLNRVTDRWTHRNFGFGEVSPSRLEIEARRELSTSRAPVAWSTLDTCDLSEVEWVRVRLGIAPAVFRGGVTVEISSPSGTIIEILGKRPLDFSRDEFEGEFVTPFWGEPGRGKWTVSCTGGVILTTEGTCHGIR</sequence>
<comment type="similarity">
    <text evidence="4">Belongs to the peptidase S8 family.</text>
</comment>
<organismHost>
    <name type="scientific">Ictaluridae</name>
    <name type="common">bullhead catfishes</name>
    <dbReference type="NCBI Taxonomy" id="7996"/>
</organismHost>
<feature type="signal peptide" evidence="1">
    <location>
        <begin position="1"/>
        <end position="17"/>
    </location>
</feature>
<feature type="chain" id="PRO_0000076426" description="Subtilisin-like protease">
    <location>
        <begin position="18"/>
        <end position="370"/>
    </location>
</feature>
<feature type="domain" description="Peptidase S8" evidence="3">
    <location>
        <begin position="18"/>
        <end position="261"/>
    </location>
</feature>
<feature type="domain" description="P/Homo B" evidence="2">
    <location>
        <begin position="240"/>
        <end position="370"/>
    </location>
</feature>
<feature type="active site" description="Charge relay system" evidence="3">
    <location>
        <position position="13"/>
    </location>
</feature>
<feature type="active site" description="Charge relay system" evidence="3">
    <location>
        <position position="35"/>
    </location>
</feature>
<feature type="active site" description="Charge relay system" evidence="3">
    <location>
        <position position="190"/>
    </location>
</feature>
<evidence type="ECO:0000255" key="1"/>
<evidence type="ECO:0000255" key="2">
    <source>
        <dbReference type="PROSITE-ProRule" id="PRU01173"/>
    </source>
</evidence>
<evidence type="ECO:0000255" key="3">
    <source>
        <dbReference type="PROSITE-ProRule" id="PRU01240"/>
    </source>
</evidence>
<evidence type="ECO:0000305" key="4"/>
<accession>Q00139</accession>
<name>VG47_ICHVA</name>
<keyword id="KW-0378">Hydrolase</keyword>
<keyword id="KW-0645">Protease</keyword>
<keyword id="KW-1185">Reference proteome</keyword>
<keyword id="KW-0720">Serine protease</keyword>
<keyword id="KW-0732">Signal</keyword>